<proteinExistence type="inferred from homology"/>
<accession>Q1PUD3</accession>
<protein>
    <recommendedName>
        <fullName evidence="1">Non-structural protein 1</fullName>
        <shortName evidence="1">NS1</shortName>
    </recommendedName>
    <alternativeName>
        <fullName evidence="1">NS1A</fullName>
    </alternativeName>
</protein>
<name>NS1_I73A5</name>
<reference key="1">
    <citation type="submission" date="2006-04" db="EMBL/GenBank/DDBJ databases">
        <title>The NIAID influenza genome sequencing project.</title>
        <authorList>
            <person name="Spiro D."/>
            <person name="Ghedin E."/>
            <person name="Sengamalay N."/>
            <person name="Halpin R."/>
            <person name="Boyne A."/>
            <person name="Zaborsky J."/>
            <person name="Feldblyum T."/>
            <person name="Subbu V."/>
            <person name="Sparenborg J."/>
            <person name="Shumway M."/>
            <person name="Sitz J."/>
            <person name="Katzel D."/>
            <person name="Koo H."/>
            <person name="Salzberg S.L."/>
            <person name="Griesemer S."/>
            <person name="St George K."/>
            <person name="Bennett R."/>
            <person name="Taylor J."/>
            <person name="Bennink J.R."/>
            <person name="Yewdell J.W."/>
            <person name="Bao Y."/>
            <person name="Bolotov P."/>
            <person name="Dernovoy D."/>
            <person name="Kiryutin B."/>
            <person name="Lipman D.J."/>
            <person name="Tatusova T."/>
        </authorList>
    </citation>
    <scope>NUCLEOTIDE SEQUENCE [GENOMIC RNA]</scope>
</reference>
<evidence type="ECO:0000255" key="1">
    <source>
        <dbReference type="HAMAP-Rule" id="MF_04066"/>
    </source>
</evidence>
<evidence type="ECO:0000256" key="2">
    <source>
        <dbReference type="SAM" id="MobiDB-lite"/>
    </source>
</evidence>
<keyword id="KW-0025">Alternative splicing</keyword>
<keyword id="KW-1262">Eukaryotic host gene expression shutoff by virus</keyword>
<keyword id="KW-1035">Host cytoplasm</keyword>
<keyword id="KW-1190">Host gene expression shutoff by virus</keyword>
<keyword id="KW-1192">Host mRNA suppression by virus</keyword>
<keyword id="KW-1048">Host nucleus</keyword>
<keyword id="KW-0945">Host-virus interaction</keyword>
<keyword id="KW-1090">Inhibition of host innate immune response by virus</keyword>
<keyword id="KW-1114">Inhibition of host interferon signaling pathway by virus</keyword>
<keyword id="KW-1102">Inhibition of host PKR by virus</keyword>
<keyword id="KW-1103">Inhibition of host pre-mRNA processing by virus</keyword>
<keyword id="KW-1088">Inhibition of host RIG-I by virus</keyword>
<keyword id="KW-1113">Inhibition of host RLR pathway by virus</keyword>
<keyword id="KW-0922">Interferon antiviral system evasion</keyword>
<keyword id="KW-0694">RNA-binding</keyword>
<keyword id="KW-0832">Ubl conjugation</keyword>
<keyword id="KW-0899">Viral immunoevasion</keyword>
<organismHost>
    <name type="scientific">Aves</name>
    <dbReference type="NCBI Taxonomy" id="8782"/>
</organismHost>
<organismHost>
    <name type="scientific">Cetacea</name>
    <name type="common">whales</name>
    <dbReference type="NCBI Taxonomy" id="9721"/>
</organismHost>
<organismHost>
    <name type="scientific">Homo sapiens</name>
    <name type="common">Human</name>
    <dbReference type="NCBI Taxonomy" id="9606"/>
</organismHost>
<organismHost>
    <name type="scientific">Phocidae</name>
    <name type="common">true seals</name>
    <dbReference type="NCBI Taxonomy" id="9709"/>
</organismHost>
<organismHost>
    <name type="scientific">Sus scrofa</name>
    <name type="common">Pig</name>
    <dbReference type="NCBI Taxonomy" id="9823"/>
</organismHost>
<comment type="function">
    <text evidence="1">Inhibits post-transcriptional processing of cellular pre-mRNA, by binding and inhibiting two cellular proteins that are required for the 3'-end processing of cellular pre-mRNAs: the 30 kDa cleavage and polyadenylation specificity factor/CPSF4 and the poly(A)-binding protein 2/PABPN1. In turn, unprocessed 3' end pre-mRNAs accumulate in the host nucleus and are no longer exported to the cytoplasm. Cellular protein synthesis is thereby shut off very early after virus infection. Viral protein synthesis is not affected by the inhibition of the cellular 3' end processing machinery because the poly(A) tails of viral mRNAs are produced by the viral polymerase through a stuttering mechanism. Prevents the establishment of the cellular antiviral state by inhibiting TRIM25-mediated RIGI ubiquitination, which normally triggers the antiviral transduction signal that leads to the activation of type I IFN genes by transcription factors IRF3 and IRF7. Also binds poly(A) and U6 snRNA. Inhibits the integrated stress response (ISR) in the infected cell by blocking dsRNA binding by EIF2AK2/PKR and further phosphorylation of EIF2S1/EIF-2ALPHA. Stress granule formation is thus inhibited, which allows protein synthesis and viral replication.</text>
</comment>
<comment type="subunit">
    <text evidence="1">Homodimer. Interacts with host TRIM25 (via coiled coil); this interaction specifically inhibits TRIM25 multimerization and TRIM25-mediated RIGI CARD ubiquitination. Interacts with human EIF2AK2/PKR, CPSF4, IVNS1ABP and PABPN1.</text>
</comment>
<comment type="subcellular location">
    <subcellularLocation>
        <location evidence="1">Host nucleus</location>
    </subcellularLocation>
    <subcellularLocation>
        <location evidence="1">Host cytoplasm</location>
    </subcellularLocation>
    <text evidence="1">In uninfected, transfected cells, NS1 is localized in the nucleus. Only in virus infected cells, the nuclear export signal is unveiled, presumably by a viral protein, and a fraction of NS1 is exported in the cytoplasm.</text>
</comment>
<comment type="alternative products">
    <event type="alternative splicing"/>
    <isoform>
        <id>Q1PUD3-1</id>
        <name>NS1</name>
        <sequence type="displayed"/>
    </isoform>
    <isoform>
        <id>Q1PUD4-1</id>
        <name>NEP</name>
        <name>NS2</name>
        <sequence type="external"/>
    </isoform>
</comment>
<comment type="domain">
    <text evidence="1">The dsRNA-binding region is required for suppression of RNA silencing.</text>
</comment>
<comment type="PTM">
    <text evidence="1">Upon interferon induction, ISGylated via host HERC5; this results in the impairment of NS1 interaction with RNA targets due to its inability to form homodimers and to interact with host EIF2AK2/PKR.</text>
</comment>
<comment type="similarity">
    <text evidence="1">Belongs to the influenza A viruses NS1 family.</text>
</comment>
<organism>
    <name type="scientific">Influenza A virus (strain A/Port Chalmers/1/1973 H3N2)</name>
    <dbReference type="NCBI Taxonomy" id="385624"/>
    <lineage>
        <taxon>Viruses</taxon>
        <taxon>Riboviria</taxon>
        <taxon>Orthornavirae</taxon>
        <taxon>Negarnaviricota</taxon>
        <taxon>Polyploviricotina</taxon>
        <taxon>Insthoviricetes</taxon>
        <taxon>Articulavirales</taxon>
        <taxon>Orthomyxoviridae</taxon>
        <taxon>Alphainfluenzavirus</taxon>
        <taxon>Alphainfluenzavirus influenzae</taxon>
        <taxon>Influenza A virus</taxon>
    </lineage>
</organism>
<sequence length="237" mass="26748">MDSNTVSSFQVDCFLWHVRKQVVDQELGDAPFLDRLRRDQKSLRGRGSTLGLDIEAATHVGKQIVEKILKEESDEALKMTMASTPASRYITDMTIEELSRDWFMLMPKQKVEGPLCIRIDQAIMDKNIMLKANFSVIFDRLETLILLRAFTEEGAIVGEISPLPSFPGHTIEDVKNAIGVLIGGLEWNDNTVRVSKTLQRFAWGSSNENGGPPLTPKQKRKMARTARSKVRRDKMAD</sequence>
<dbReference type="EMBL" id="CY009352">
    <property type="protein sequence ID" value="ABE12562.1"/>
    <property type="molecule type" value="Genomic_RNA"/>
</dbReference>
<dbReference type="BMRB" id="Q1PUD3"/>
<dbReference type="SMR" id="Q1PUD3"/>
<dbReference type="Proteomes" id="UP000133870">
    <property type="component" value="Genome"/>
</dbReference>
<dbReference type="GO" id="GO:0030430">
    <property type="term" value="C:host cell cytoplasm"/>
    <property type="evidence" value="ECO:0007669"/>
    <property type="project" value="UniProtKB-SubCell"/>
</dbReference>
<dbReference type="GO" id="GO:0042025">
    <property type="term" value="C:host cell nucleus"/>
    <property type="evidence" value="ECO:0007669"/>
    <property type="project" value="UniProtKB-SubCell"/>
</dbReference>
<dbReference type="GO" id="GO:0030291">
    <property type="term" value="F:protein serine/threonine kinase inhibitor activity"/>
    <property type="evidence" value="ECO:0007669"/>
    <property type="project" value="UniProtKB-KW"/>
</dbReference>
<dbReference type="GO" id="GO:0003723">
    <property type="term" value="F:RNA binding"/>
    <property type="evidence" value="ECO:0007669"/>
    <property type="project" value="UniProtKB-KW"/>
</dbReference>
<dbReference type="GO" id="GO:0039540">
    <property type="term" value="P:symbiont-mediated suppression of host cytoplasmic pattern recognition receptor signaling pathway via inhibition of RIG-I activity"/>
    <property type="evidence" value="ECO:0007669"/>
    <property type="project" value="UniProtKB-KW"/>
</dbReference>
<dbReference type="GO" id="GO:0039657">
    <property type="term" value="P:symbiont-mediated suppression of host gene expression"/>
    <property type="evidence" value="ECO:0007669"/>
    <property type="project" value="UniProtKB-KW"/>
</dbReference>
<dbReference type="GO" id="GO:0039524">
    <property type="term" value="P:symbiont-mediated suppression of host mRNA processing"/>
    <property type="evidence" value="ECO:0007669"/>
    <property type="project" value="UniProtKB-KW"/>
</dbReference>
<dbReference type="GO" id="GO:0039580">
    <property type="term" value="P:symbiont-mediated suppression of host PKR/eIFalpha signaling"/>
    <property type="evidence" value="ECO:0007669"/>
    <property type="project" value="UniProtKB-KW"/>
</dbReference>
<dbReference type="GO" id="GO:0039502">
    <property type="term" value="P:symbiont-mediated suppression of host type I interferon-mediated signaling pathway"/>
    <property type="evidence" value="ECO:0007669"/>
    <property type="project" value="UniProtKB-KW"/>
</dbReference>
<dbReference type="FunFam" id="1.10.287.10:FF:000001">
    <property type="entry name" value="Non-structural protein 1"/>
    <property type="match status" value="1"/>
</dbReference>
<dbReference type="FunFam" id="3.30.420.330:FF:000001">
    <property type="entry name" value="Non-structural protein 1"/>
    <property type="match status" value="1"/>
</dbReference>
<dbReference type="Gene3D" id="3.30.420.330">
    <property type="entry name" value="Influenza virus non-structural protein, effector domain"/>
    <property type="match status" value="1"/>
</dbReference>
<dbReference type="Gene3D" id="1.10.287.10">
    <property type="entry name" value="S15/NS1, RNA-binding"/>
    <property type="match status" value="1"/>
</dbReference>
<dbReference type="HAMAP" id="MF_04066">
    <property type="entry name" value="INFV_NS1"/>
    <property type="match status" value="1"/>
</dbReference>
<dbReference type="InterPro" id="IPR004208">
    <property type="entry name" value="NS1"/>
</dbReference>
<dbReference type="InterPro" id="IPR000256">
    <property type="entry name" value="NS1A"/>
</dbReference>
<dbReference type="InterPro" id="IPR038064">
    <property type="entry name" value="NS1A_effect_dom-like_sf"/>
</dbReference>
<dbReference type="InterPro" id="IPR009068">
    <property type="entry name" value="uS15_NS1_RNA-bd_sf"/>
</dbReference>
<dbReference type="Pfam" id="PF00600">
    <property type="entry name" value="Flu_NS1"/>
    <property type="match status" value="1"/>
</dbReference>
<dbReference type="SUPFAM" id="SSF143021">
    <property type="entry name" value="Ns1 effector domain-like"/>
    <property type="match status" value="1"/>
</dbReference>
<dbReference type="SUPFAM" id="SSF47060">
    <property type="entry name" value="S15/NS1 RNA-binding domain"/>
    <property type="match status" value="1"/>
</dbReference>
<gene>
    <name evidence="1" type="primary">NS</name>
</gene>
<feature type="chain" id="PRO_0000324254" description="Non-structural protein 1">
    <location>
        <begin position="1"/>
        <end position="237"/>
    </location>
</feature>
<feature type="region of interest" description="RNA-binding and homodimerization" evidence="1">
    <location>
        <begin position="1"/>
        <end position="73"/>
    </location>
</feature>
<feature type="region of interest" description="CPSF4-binding" evidence="1">
    <location>
        <begin position="180"/>
        <end position="215"/>
    </location>
</feature>
<feature type="region of interest" description="Disordered" evidence="2">
    <location>
        <begin position="205"/>
        <end position="237"/>
    </location>
</feature>
<feature type="region of interest" description="PABPN1-binding" evidence="1">
    <location>
        <begin position="223"/>
        <end position="230"/>
    </location>
</feature>
<feature type="short sequence motif" description="Nuclear localization signal" evidence="1">
    <location>
        <begin position="34"/>
        <end position="38"/>
    </location>
</feature>
<feature type="short sequence motif" description="Nuclear export signal" evidence="1">
    <location>
        <begin position="137"/>
        <end position="146"/>
    </location>
</feature>
<feature type="compositionally biased region" description="Basic residues" evidence="2">
    <location>
        <begin position="217"/>
        <end position="237"/>
    </location>
</feature>